<name>KATG_MYCTU</name>
<reference key="1">
    <citation type="journal article" date="1993" name="J. Bacteriol.">
        <title>Characterization of the katG gene encoding a catalase-peroxidase required for the isoniazid susceptibility of Mycobacterium tuberculosis.</title>
        <authorList>
            <person name="Heym B."/>
            <person name="Zhang Y."/>
            <person name="Poulet S."/>
            <person name="Young D."/>
            <person name="Cole S.T."/>
        </authorList>
    </citation>
    <scope>NUCLEOTIDE SEQUENCE [GENOMIC DNA]</scope>
    <source>
        <strain>ATCC 25618 / H37Rv</strain>
    </source>
</reference>
<reference key="2">
    <citation type="submission" date="1994-09" db="EMBL/GenBank/DDBJ databases">
        <authorList>
            <person name="Cole S.T."/>
        </authorList>
    </citation>
    <scope>SEQUENCE REVISION</scope>
</reference>
<reference key="3">
    <citation type="journal article" date="1995" name="J. Infect. Dis.">
        <title>Rapid identification of a point mutation of the Mycobacterium tuberculosis catalase-peroxidase (katG) gene associated with isoniazid resistance.</title>
        <authorList>
            <person name="Cockerill F.R. III"/>
            <person name="Uhl J.R."/>
            <person name="Temesgen Z."/>
            <person name="Zhang Y."/>
            <person name="Stockman L."/>
            <person name="Roberts G.D."/>
            <person name="Williams D.L."/>
            <person name="Kline B.C."/>
        </authorList>
    </citation>
    <scope>NUCLEOTIDE SEQUENCE [GENOMIC DNA]</scope>
    <source>
        <strain>ATCC 25618 / H37Rv</strain>
    </source>
</reference>
<reference key="4">
    <citation type="submission" date="1996-01" db="EMBL/GenBank/DDBJ databases">
        <title>katG gene mutations in isoniazid-resistant Mycobacterium tuberculosis strains isolated from Finnish patients.</title>
        <authorList>
            <person name="Marttila H.J."/>
            <person name="Soini H."/>
            <person name="Huovinen P."/>
            <person name="Viljanen M.K."/>
        </authorList>
    </citation>
    <scope>NUCLEOTIDE SEQUENCE [GENOMIC DNA]</scope>
    <source>
        <strain>INH-resistant strains</strain>
    </source>
</reference>
<reference key="5">
    <citation type="journal article" date="2012" name="J. Clin. Microbiol.">
        <title>Next-generation ion torrent sequencing of drug resistance mutations in Mycobacterium tuberculosis strains.</title>
        <authorList>
            <person name="Daum L.T."/>
            <person name="Rodriguez J.D."/>
            <person name="Worthy S.A."/>
            <person name="Ismail N.A."/>
            <person name="Omar S.V."/>
            <person name="Dreyer A.W."/>
            <person name="Fourie P.B."/>
            <person name="Hoosen A.A."/>
            <person name="Chambers J.P."/>
            <person name="Fischer G.W."/>
        </authorList>
    </citation>
    <scope>NUCLEOTIDE SEQUENCE [GENOMIC DNA]</scope>
    <source>
        <strain>2937643</strain>
        <strain>3150565</strain>
        <strain>3264812</strain>
        <strain>MTB001</strain>
        <strain>MTB003</strain>
        <strain>MTB005</strain>
        <strain>MTB007</strain>
    </source>
</reference>
<reference key="6">
    <citation type="journal article" date="1998" name="Nature">
        <title>Deciphering the biology of Mycobacterium tuberculosis from the complete genome sequence.</title>
        <authorList>
            <person name="Cole S.T."/>
            <person name="Brosch R."/>
            <person name="Parkhill J."/>
            <person name="Garnier T."/>
            <person name="Churcher C.M."/>
            <person name="Harris D.E."/>
            <person name="Gordon S.V."/>
            <person name="Eiglmeier K."/>
            <person name="Gas S."/>
            <person name="Barry C.E. III"/>
            <person name="Tekaia F."/>
            <person name="Badcock K."/>
            <person name="Basham D."/>
            <person name="Brown D."/>
            <person name="Chillingworth T."/>
            <person name="Connor R."/>
            <person name="Davies R.M."/>
            <person name="Devlin K."/>
            <person name="Feltwell T."/>
            <person name="Gentles S."/>
            <person name="Hamlin N."/>
            <person name="Holroyd S."/>
            <person name="Hornsby T."/>
            <person name="Jagels K."/>
            <person name="Krogh A."/>
            <person name="McLean J."/>
            <person name="Moule S."/>
            <person name="Murphy L.D."/>
            <person name="Oliver S."/>
            <person name="Osborne J."/>
            <person name="Quail M.A."/>
            <person name="Rajandream M.A."/>
            <person name="Rogers J."/>
            <person name="Rutter S."/>
            <person name="Seeger K."/>
            <person name="Skelton S."/>
            <person name="Squares S."/>
            <person name="Squares R."/>
            <person name="Sulston J.E."/>
            <person name="Taylor K."/>
            <person name="Whitehead S."/>
            <person name="Barrell B.G."/>
        </authorList>
    </citation>
    <scope>NUCLEOTIDE SEQUENCE [LARGE SCALE GENOMIC DNA]</scope>
    <source>
        <strain>ATCC 25618 / H37Rv</strain>
    </source>
</reference>
<reference key="7">
    <citation type="journal article" date="1992" name="Nature">
        <title>The catalase-peroxidase gene and isoniazid resistance of Mycobacterium tuberculosis.</title>
        <authorList>
            <person name="Zhang Y."/>
            <person name="Heym B."/>
            <person name="Allen B."/>
            <person name="Young D."/>
            <person name="Cole S.T."/>
        </authorList>
    </citation>
    <scope>PARTIAL NUCLEOTIDE SEQUENCE [GENOMIC DNA]</scope>
    <scope>FUNCTION IN ISONIAZID ACTIVATION</scope>
    <scope>ISONIAZID RESISTANCE</scope>
    <source>
        <strain>ATCC 25618 / H37Rv</strain>
    </source>
</reference>
<reference key="8">
    <citation type="submission" date="1997-06" db="EMBL/GenBank/DDBJ databases">
        <authorList>
            <person name="Song J."/>
            <person name="Deretic V."/>
        </authorList>
    </citation>
    <scope>NUCLEOTIDE SEQUENCE [GENOMIC DNA] OF 1-94</scope>
    <source>
        <strain>ATCC 25618 / H37Rv</strain>
    </source>
</reference>
<reference key="9">
    <citation type="journal article" date="1999" name="Microbiology">
        <title>Involvement of the N- and C-terminal domains of Mycobacterium tuberculosis KatG in the protection of mutant Escherichia coli against DNA-damaging agents.</title>
        <authorList>
            <person name="Mulder M.A."/>
            <person name="Nair S."/>
            <person name="Abratt V.R."/>
            <person name="Zappe H."/>
            <person name="Steyn L.M."/>
        </authorList>
    </citation>
    <scope>NUCLEOTIDE SEQUENCE [GENOMIC DNA] OF 500-740</scope>
    <scope>FUNCTION</scope>
    <scope>DOMAIN</scope>
    <source>
        <strain>ATCC 25618 / H37Rv</strain>
    </source>
</reference>
<reference key="10">
    <citation type="journal article" date="1996" name="Science">
        <title>Compensatory ahpC gene expression in isoniazid-resistant Mycobacterium tuberculosis.</title>
        <authorList>
            <person name="Sherman D.R."/>
            <person name="Mdluli K."/>
            <person name="Hickey M.J."/>
            <person name="Arain T.M."/>
            <person name="Morris S.L."/>
            <person name="Barry C.E. III"/>
            <person name="Stover C.K."/>
        </authorList>
    </citation>
    <scope>FUNCTION</scope>
    <scope>INDUCTION</scope>
</reference>
<reference key="11">
    <citation type="journal article" date="1997" name="J. Biol. Chem.">
        <title>Overexpression, purification, and characterization of the catalase-peroxidase KatG from Mycobacterium tuberculosis.</title>
        <authorList>
            <person name="Johnsson K."/>
            <person name="Froland W.A."/>
            <person name="Schultz P.G."/>
        </authorList>
    </citation>
    <scope>FUNCTION AS A CATALASE-PEROXIDASE</scope>
    <scope>CATALYTIC ACTIVITY</scope>
    <scope>COFACTOR</scope>
    <scope>BIOPHYSICOCHEMICAL PROPERTIES</scope>
    <scope>MUTAGENESIS OF ARG-463</scope>
    <scope>SUBUNIT</scope>
</reference>
<reference key="12">
    <citation type="journal article" date="1999" name="Biochem. Biophys. Res. Commun.">
        <title>Mycobacterium tuberculosis KatG is a peroxynitritase.</title>
        <authorList>
            <person name="Wengenack N.L."/>
            <person name="Jensen M.P."/>
            <person name="Rusnak F."/>
            <person name="Stern M.K."/>
        </authorList>
    </citation>
    <scope>FUNCTION AS A PEROXYNITRITASE</scope>
</reference>
<reference key="13">
    <citation type="journal article" date="2001" name="Mol. Microbiol.">
        <title>Regulation of catalase-peroxidase (KatG) expression, isoniazid sensitivity and virulence by furA of Mycobacterium tuberculosis.</title>
        <authorList>
            <person name="Pym A.S."/>
            <person name="Domenech P."/>
            <person name="Honore N."/>
            <person name="Song J."/>
            <person name="Deretic V."/>
            <person name="Cole S.T."/>
        </authorList>
    </citation>
    <scope>INDUCTION</scope>
    <source>
        <strain>ATCC 25618 / H37Rv</strain>
    </source>
</reference>
<reference key="14">
    <citation type="journal article" date="2004" name="Mol. Microbiol.">
        <title>Role of KatG catalase-peroxidase in mycobacterial pathogenesis: countering the phagocyte oxidative burst.</title>
        <authorList>
            <person name="Ng V.H."/>
            <person name="Cox J.S."/>
            <person name="Sousa A.O."/>
            <person name="MacMicking J.D."/>
            <person name="McKinney J.D."/>
        </authorList>
    </citation>
    <scope>FUNCTION IN PATHOGENESIS</scope>
    <scope>DISRUPTION PHENOTYPE</scope>
    <source>
        <strain>ATCC 35801 / TMC 107 / Erdman</strain>
    </source>
</reference>
<reference key="15">
    <citation type="journal article" date="2005" name="J. Biol. Chem.">
        <title>The Met-Tyr-Trp cross-link in Mycobacterium tuberculosis catalase-peroxidase (KatG): autocatalytic formation and effect on enzyme catalysis and spectroscopic properties.</title>
        <authorList>
            <person name="Ghiladi R.A."/>
            <person name="Knudsen G.M."/>
            <person name="Medzihradszky K.F."/>
            <person name="Ortiz de Montellano P.R."/>
        </authorList>
    </citation>
    <scope>MET-TYR-TRP CROSS-LINK</scope>
</reference>
<reference key="16">
    <citation type="journal article" date="2007" name="Biochemistry">
        <title>Redox intermediates in the catalase cycle of catalase-peroxidases from Synechocystis PCC 6803, Burkholderia pseudomallei, and Mycobacterium tuberculosis.</title>
        <authorList>
            <person name="Jakopitsch C."/>
            <person name="Vlasits J."/>
            <person name="Wiseman B."/>
            <person name="Loewen P.C."/>
            <person name="Obinger C."/>
        </authorList>
    </citation>
    <scope>CATALYTIC MECHANISM</scope>
</reference>
<reference key="17">
    <citation type="journal article" date="2007" name="J. Am. Chem. Soc.">
        <title>Two [Fe(IV)=O Trp*] intermediates in M.tuberculosis catalase-peroxidase discriminated by multifrequency (9-285 GHz) EPR spectroscopy: reactivity toward isoniazid.</title>
        <authorList>
            <person name="Singh R."/>
            <person name="Switala J."/>
            <person name="Loewen P.C."/>
            <person name="Ivancich A."/>
        </authorList>
    </citation>
    <scope>RADICAL INTERMEDIATE</scope>
    <scope>ACTIVE SITE</scope>
</reference>
<reference key="18">
    <citation type="journal article" date="2008" name="Arch. Biochem. Biophys.">
        <title>Comparative study of catalase-peroxidases (KatGs).</title>
        <authorList>
            <person name="Singh R."/>
            <person name="Wiseman B."/>
            <person name="Deemagarn T."/>
            <person name="Jha V."/>
            <person name="Switala J."/>
            <person name="Loewen P.C."/>
        </authorList>
    </citation>
    <scope>FUNCTION AS A CATALASE-PEROXIDASE</scope>
    <scope>CATALYTIC ACTIVITY</scope>
    <scope>BIOPHYSICOCHEMICAL PROPERTIES</scope>
</reference>
<reference key="19">
    <citation type="journal article" date="2008" name="BMC Syst. Biol.">
        <title>targetTB: a target identification pipeline for Mycobacterium tuberculosis through an interactome, reactome and genome-scale structural analysis.</title>
        <authorList>
            <person name="Raman K."/>
            <person name="Yeturu K."/>
            <person name="Chandra N."/>
        </authorList>
    </citation>
    <scope>IDENTIFICATION AS A DRUG TARGET [LARGE SCALE ANALYSIS]</scope>
</reference>
<reference key="20">
    <citation type="journal article" date="2011" name="Mol. Cell. Proteomics">
        <title>Proteogenomic analysis of Mycobacterium tuberculosis by high resolution mass spectrometry.</title>
        <authorList>
            <person name="Kelkar D.S."/>
            <person name="Kumar D."/>
            <person name="Kumar P."/>
            <person name="Balakrishnan L."/>
            <person name="Muthusamy B."/>
            <person name="Yadav A.K."/>
            <person name="Shrivastava P."/>
            <person name="Marimuthu A."/>
            <person name="Anand S."/>
            <person name="Sundaram H."/>
            <person name="Kingsbury R."/>
            <person name="Harsha H.C."/>
            <person name="Nair B."/>
            <person name="Prasad T.S."/>
            <person name="Chauhan D.S."/>
            <person name="Katoch K."/>
            <person name="Katoch V.M."/>
            <person name="Kumar P."/>
            <person name="Chaerkady R."/>
            <person name="Ramachandran S."/>
            <person name="Dash D."/>
            <person name="Pandey A."/>
        </authorList>
    </citation>
    <scope>IDENTIFICATION BY MASS SPECTROMETRY [LARGE SCALE ANALYSIS]</scope>
    <source>
        <strain>ATCC 25618 / H37Rv</strain>
    </source>
</reference>
<reference key="21">
    <citation type="journal article" date="2011" name="Mol. Microbiol.">
        <title>Downregulation of katG expression is associated with isoniazid resistance in Mycobacterium tuberculosis.</title>
        <authorList>
            <person name="Ando H."/>
            <person name="Kitao T."/>
            <person name="Miyoshi-Akiyama T."/>
            <person name="Kato S."/>
            <person name="Mori T."/>
            <person name="Kirikae T."/>
        </authorList>
    </citation>
    <scope>DRUG RESISTANCE</scope>
</reference>
<reference key="22">
    <citation type="journal article" date="2004" name="J. Biol. Chem.">
        <title>Crystal structure of Mycobacterium tuberculosis catalase-peroxidase.</title>
        <authorList>
            <person name="Bertrand T."/>
            <person name="Eady N.A.J."/>
            <person name="Jones J.N."/>
            <person name="Jesmin X."/>
            <person name="Nagy J.M."/>
            <person name="Jamart-Gregoire B."/>
            <person name="Raven E.L."/>
            <person name="Brown K.A."/>
        </authorList>
    </citation>
    <scope>X-RAY CRYSTALLOGRAPHY (2.41 ANGSTROMS) OF 2-740 IN COMPLEX WITH HEME</scope>
    <scope>COFACTOR</scope>
    <scope>TRP-TYR-MET CROSS-LINK</scope>
    <scope>SUBUNIT</scope>
</reference>
<reference key="23">
    <citation type="journal article" date="2006" name="Biochemistry">
        <title>Hydrogen peroxide-mediated isoniazid activation catalyzed by Mycobacterium tuberculosis catalase-peroxidase (KatG) and its S315T mutant.</title>
        <authorList>
            <person name="Zhao X."/>
            <person name="Yu H."/>
            <person name="Yu S."/>
            <person name="Wang F."/>
            <person name="Sacchettini J.C."/>
            <person name="Magliozzo R.S."/>
        </authorList>
    </citation>
    <scope>X-RAY CRYSTALLOGRAPHY (2.0 ANGSTROMS) OF WILD-TYPE AND MUTANT THR-315 IN COMPLEX WITH HEME</scope>
    <scope>SUBUNIT</scope>
    <scope>INH ACTIVATION</scope>
    <scope>MUTAGENESIS OF SER-315</scope>
</reference>
<reference key="24">
    <citation type="journal article" date="2013" name="Chem. Commun. (Camb.)">
        <title>Access channel residues Ser315 and Asp137 in Mycobacterium tuberculosis catalase-peroxidase (KatG) control peroxidatic activation of the pro-drug isoniazid.</title>
        <authorList>
            <person name="Zhao X."/>
            <person name="Hersleth H.P."/>
            <person name="Zhu J."/>
            <person name="Andersson K.K."/>
            <person name="Magliozzo R.S."/>
        </authorList>
    </citation>
    <scope>X-RAY CRYSTALLOGRAPHY (2.5 ANGSTROMS) OF MUTANTS SER-137 AND LEU-418 IN COMPLEX WITH HEME</scope>
    <scope>FUNCTION IN INH ACTIVATION</scope>
    <scope>BIOPHYSICOCHEMICAL PROPERTIES</scope>
    <scope>DRUG RESISTANCE</scope>
    <scope>MUTAGENESIS OF ASP-137; TYR-229; SER-315; TRP-321 AND ARG-418</scope>
</reference>
<protein>
    <recommendedName>
        <fullName evidence="1 16 17">Catalase-peroxidase</fullName>
        <shortName evidence="1 15">CP</shortName>
        <ecNumber evidence="1 10 13">1.11.1.21</ecNumber>
    </recommendedName>
    <alternativeName>
        <fullName evidence="1">Peroxidase/catalase</fullName>
    </alternativeName>
</protein>
<comment type="function">
    <text evidence="1 2 5 10 12 13">Bifunctional enzyme with both catalase and broad-spectrum peroxidase activity, oxidizing various electron donors including NADP(H) (PubMed:18178143, PubMed:9006925). Protects M.tuberculosis against toxic reactive oxygen species (ROS) including hydrogen peroxide as well as organic peroxides and thus contributes to its survival within host macrophages by countering the phagocyte oxidative burst (PubMed:15165233, PubMed:8658136). Also displays efficient peroxynitritase activity, which may help the bacterium to persist in macrophages (PubMed:10080924).</text>
</comment>
<comment type="function">
    <text evidence="3">Might be involved in DNA repair. Partly complements recA-deficient E.coli cells exposed to UV radiation, mitomycin C or hydrogen peroxide. Increases resistance to mitomycin C in E.coli cells deficient for either uvrA, uvrB or uvrC.</text>
</comment>
<comment type="function">
    <text evidence="8 10 11 13 14">Catalyzes the oxidative activation of the antitubercular pro-drug isoniazid (INH) to generate an isonicotinoyl radical that then reacts nonenzymatically with NAD to form an isonicotinoyl-NAD adduct which inhibits InhA.</text>
</comment>
<comment type="catalytic activity">
    <reaction evidence="1 10 13">
        <text>H2O2 + AH2 = A + 2 H2O</text>
        <dbReference type="Rhea" id="RHEA:30275"/>
        <dbReference type="ChEBI" id="CHEBI:13193"/>
        <dbReference type="ChEBI" id="CHEBI:15377"/>
        <dbReference type="ChEBI" id="CHEBI:16240"/>
        <dbReference type="ChEBI" id="CHEBI:17499"/>
        <dbReference type="EC" id="1.11.1.21"/>
    </reaction>
</comment>
<comment type="catalytic activity">
    <reaction evidence="1 10 13">
        <text>2 H2O2 = O2 + 2 H2O</text>
        <dbReference type="Rhea" id="RHEA:20309"/>
        <dbReference type="ChEBI" id="CHEBI:15377"/>
        <dbReference type="ChEBI" id="CHEBI:15379"/>
        <dbReference type="ChEBI" id="CHEBI:16240"/>
        <dbReference type="EC" id="1.11.1.21"/>
    </reaction>
</comment>
<comment type="cofactor">
    <cofactor evidence="6 13">
        <name>heme b</name>
        <dbReference type="ChEBI" id="CHEBI:60344"/>
    </cofactor>
    <text evidence="6 13">Binds 1 heme b (iron(II)-protoporphyrin IX) group per subunit.</text>
</comment>
<comment type="biophysicochemical properties">
    <kinetics>
        <KM evidence="10">2.4 mM for H(2)O(2) in the catalase reaction (at pH 7.0)</KM>
        <KM evidence="10">225 mM for H(2)O(2) in the catalase reaction (at pH 5.5-6.0)</KM>
        <KM evidence="13">5.18 mM for H(2)O(2) in the catalase reaction (at pH 7.0 and 25 degrees Celsius)</KM>
        <KM evidence="10">360 uM for H(2)O(2) in the peroxidase reaction</KM>
        <KM evidence="10">67 uM for ABTS</KM>
        <KM evidence="11">192 uM for isoniazid (at pH 7.2)</KM>
        <Vmax evidence="10">7620.0 umol/min/mg enzyme for the catalase reaction (at pH 5.5-6.0)</Vmax>
        <Vmax evidence="10">5700.0 umol/min/mg enzyme for the catalase reaction (at pH 7.0)</Vmax>
        <Vmax evidence="10">14.0 umol/min/mg enzyme for the peroxidase reaction with ABTS as substrate</Vmax>
        <text evidence="13">kcat is 10100 sec(-1) for the catalase reaction (at pH 7.0 and 25 degrees Celsius).</text>
    </kinetics>
    <phDependence>
        <text evidence="10 13">Optimum pH is 7.0 for the catalase activity and 4.5-5.5 for the peroxidase activity (PubMed:9006925). Optimum pH is 4.75 for the peroxidase activity (PubMed:18178143).</text>
    </phDependence>
</comment>
<comment type="subunit">
    <text evidence="6 8 13">Homodimer.</text>
</comment>
<comment type="induction">
    <text evidence="4 12">By treatment with H(2)O(2) (PubMed:8658136). Repressed by FurA (PubMed:11401695).</text>
</comment>
<comment type="domain">
    <text evidence="19">Consists of two related domains. The catalase-peroxidase activity is associated with the N-terminal domain but no definite function has been assigned to the C-terminal domain, although it may play a role in substrate binding.</text>
</comment>
<comment type="PTM">
    <text evidence="1 7">Formation of the three residue Trp-Tyr-Met cross-link is important for the catalase, but not the peroxidase activity of the enzyme (By similarity). The formation of the Trp-Tyr-Met cross-link is autocatalytic (PubMed:15840564).</text>
</comment>
<comment type="disruption phenotype">
    <text evidence="5">Cells lacking this gene are devoid of catalase activity, supersensitive to H(2)O(2) exposure and highly resistant to the antitubercular drug isoniazid (INH) in vitro. This mutant strain is markedly attenuated for virulence in mice and displays impaired growth in infected macrophages, but its growth and survival is indistinguishable from wild-type in macrophages lacking the ROS-generating NADPH oxidase (Phox).</text>
</comment>
<comment type="miscellaneous">
    <text evidence="9">In contrast to the Synechocystis sp. enzyme, no Trp radical is formed on the distal Trp residue (Trp-91).</text>
</comment>
<comment type="miscellaneous">
    <text evidence="21">Was identified as a high-confidence drug target.</text>
</comment>
<comment type="miscellaneous">
    <text evidence="18 20 22 23">Many isoniazid-resistant clinical isolates contain mutations in katG, leading to abolition or reduction of catalase/peroxidase activity which results in lack of INH activation, or to a reduced affinity for INH. Other mechanisms of INH resistance include deletion of the katG gene, and down-regulation of katG expression due to mutations in the furA-katG intergenic region.</text>
</comment>
<comment type="similarity">
    <text evidence="1">Belongs to the peroxidase family. Peroxidase/catalase subfamily.</text>
</comment>
<organism>
    <name type="scientific">Mycobacterium tuberculosis (strain ATCC 25618 / H37Rv)</name>
    <dbReference type="NCBI Taxonomy" id="83332"/>
    <lineage>
        <taxon>Bacteria</taxon>
        <taxon>Bacillati</taxon>
        <taxon>Actinomycetota</taxon>
        <taxon>Actinomycetes</taxon>
        <taxon>Mycobacteriales</taxon>
        <taxon>Mycobacteriaceae</taxon>
        <taxon>Mycobacterium</taxon>
        <taxon>Mycobacterium tuberculosis complex</taxon>
    </lineage>
</organism>
<sequence length="740" mass="80605">MPEQHPPITETTTGAASNGCPVVGHMKYPVEGGGNQDWWPNRLNLKVLHQNPAVADPMGAAFDYAAEVATIDVDALTRDIEEVMTTSQPWWPADYGHYGPLFIRMAWHAAGTYRIHDGRGGAGGGMQRFAPLNSWPDNASLDKARRLLWPVKKKYGKKLSWADLIVFAGNCALESMGFKTFGFGFGRVDQWEPDEVYWGKEATWLGDERYSGKRDLENPLAAVQMGLIYVNPEGPNGNPDPMAAAVDIRETFRRMAMNDVETAALIVGGHTFGKTHGAGPADLVGPEPEAAPLEQMGLGWKSSYGTGTGKDAITSGIEVVWTNTPTKWDNSFLEILYGYEWELTKSPAGAWQYTAKDGAGAGTIPDPFGGPGRSPTMLATDLSLRVDPIYERITRRWLEHPEELADEFAKAWYKLIHRDMGPVARYLGPLVPKQTLLWQDPVPAVSHDLVGEAEIASLKSQIRASGLTVSQLVSTAWAAASSFRGSDKRGGANGGRIRLQPQVGWEVNDPDGDLRKVIRTLEEIQESFNSAAPGNIKVSFADLVVLGGCAAIEKAAKAAGHNITVPFTPGRTDASQEQTDVESFAVLEPKADGFRNYLGKGNPLPAEYMLLDKANLLTLSAPEMTVLVGGLRVLGANYKRLPLGVFTEASESLTNDFFVNLLDMGITWEPSPADDGTYQGKDGSGKVKWTGSRVDLVFGSNSELRALVEVYGADDAQPKFVQDFVAAWDKVMNLDRFDVR</sequence>
<keyword id="KW-0002">3D-structure</keyword>
<keyword id="KW-0046">Antibiotic resistance</keyword>
<keyword id="KW-0349">Heme</keyword>
<keyword id="KW-0376">Hydrogen peroxide</keyword>
<keyword id="KW-0408">Iron</keyword>
<keyword id="KW-0479">Metal-binding</keyword>
<keyword id="KW-0556">Organic radical</keyword>
<keyword id="KW-0560">Oxidoreductase</keyword>
<keyword id="KW-0575">Peroxidase</keyword>
<keyword id="KW-1185">Reference proteome</keyword>
<keyword id="KW-0843">Virulence</keyword>
<proteinExistence type="evidence at protein level"/>
<evidence type="ECO:0000255" key="1">
    <source>
        <dbReference type="HAMAP-Rule" id="MF_01961"/>
    </source>
</evidence>
<evidence type="ECO:0000269" key="2">
    <source>
    </source>
</evidence>
<evidence type="ECO:0000269" key="3">
    <source>
    </source>
</evidence>
<evidence type="ECO:0000269" key="4">
    <source>
    </source>
</evidence>
<evidence type="ECO:0000269" key="5">
    <source>
    </source>
</evidence>
<evidence type="ECO:0000269" key="6">
    <source>
    </source>
</evidence>
<evidence type="ECO:0000269" key="7">
    <source>
    </source>
</evidence>
<evidence type="ECO:0000269" key="8">
    <source>
    </source>
</evidence>
<evidence type="ECO:0000269" key="9">
    <source>
    </source>
</evidence>
<evidence type="ECO:0000269" key="10">
    <source>
    </source>
</evidence>
<evidence type="ECO:0000269" key="11">
    <source>
    </source>
</evidence>
<evidence type="ECO:0000269" key="12">
    <source>
    </source>
</evidence>
<evidence type="ECO:0000269" key="13">
    <source>
    </source>
</evidence>
<evidence type="ECO:0000269" key="14">
    <source>
    </source>
</evidence>
<evidence type="ECO:0000303" key="15">
    <source>
    </source>
</evidence>
<evidence type="ECO:0000303" key="16">
    <source>
    </source>
</evidence>
<evidence type="ECO:0000303" key="17">
    <source>
    </source>
</evidence>
<evidence type="ECO:0000305" key="18"/>
<evidence type="ECO:0000305" key="19">
    <source>
    </source>
</evidence>
<evidence type="ECO:0000305" key="20">
    <source>
    </source>
</evidence>
<evidence type="ECO:0000305" key="21">
    <source>
    </source>
</evidence>
<evidence type="ECO:0000305" key="22">
    <source>
    </source>
</evidence>
<evidence type="ECO:0000305" key="23">
    <source>
    </source>
</evidence>
<evidence type="ECO:0007744" key="24">
    <source>
        <dbReference type="PDB" id="1SJ2"/>
    </source>
</evidence>
<evidence type="ECO:0007744" key="25">
    <source>
        <dbReference type="PDB" id="2CCA"/>
    </source>
</evidence>
<evidence type="ECO:0007744" key="26">
    <source>
        <dbReference type="PDB" id="2CCD"/>
    </source>
</evidence>
<evidence type="ECO:0007744" key="27">
    <source>
        <dbReference type="PDB" id="4C51"/>
    </source>
</evidence>
<evidence type="ECO:0007829" key="28">
    <source>
        <dbReference type="PDB" id="2CCA"/>
    </source>
</evidence>
<evidence type="ECO:0007829" key="29">
    <source>
        <dbReference type="PDB" id="2CCD"/>
    </source>
</evidence>
<evidence type="ECO:0007829" key="30">
    <source>
        <dbReference type="PDB" id="7A2I"/>
    </source>
</evidence>
<evidence type="ECO:0007829" key="31">
    <source>
        <dbReference type="PDB" id="7A7A"/>
    </source>
</evidence>
<evidence type="ECO:0007829" key="32">
    <source>
        <dbReference type="PDB" id="7A7C"/>
    </source>
</evidence>
<evidence type="ECO:0007829" key="33">
    <source>
        <dbReference type="PDB" id="7A8Z"/>
    </source>
</evidence>
<evidence type="ECO:0007829" key="34">
    <source>
        <dbReference type="PDB" id="8CZP"/>
    </source>
</evidence>
<evidence type="ECO:0007829" key="35">
    <source>
        <dbReference type="PDB" id="8W1W"/>
    </source>
</evidence>
<evidence type="ECO:0007829" key="36">
    <source>
        <dbReference type="PDB" id="8W1X"/>
    </source>
</evidence>
<evidence type="ECO:0007829" key="37">
    <source>
        <dbReference type="PDB" id="8W1Y"/>
    </source>
</evidence>
<accession>P9WIE5</accession>
<accession>J9VFD2</accession>
<accession>O08221</accession>
<accession>Q08129</accession>
<accession>Q50544</accession>
<accession>Q50546</accession>
<accession>Q50551</accession>
<accession>Q50552</accession>
<accession>Q50553</accession>
<accession>Q50554</accession>
<accession>Q50555</accession>
<accession>Q50762</accession>
<accession>Q57215</accession>
<accession>Q57274</accession>
<feature type="chain" id="PRO_0000055574" description="Catalase-peroxidase">
    <location>
        <begin position="1"/>
        <end position="740"/>
    </location>
</feature>
<feature type="active site" description="Proton acceptor" evidence="1">
    <location>
        <position position="108"/>
    </location>
</feature>
<feature type="active site" description="Tryptophan radical intermediate" evidence="9">
    <location>
        <position position="321"/>
    </location>
</feature>
<feature type="binding site" description="axial binding residue" evidence="6 8 11 24 25 26 27">
    <location>
        <position position="270"/>
    </location>
    <ligand>
        <name>heme b</name>
        <dbReference type="ChEBI" id="CHEBI:60344"/>
    </ligand>
    <ligandPart>
        <name>Fe</name>
        <dbReference type="ChEBI" id="CHEBI:18248"/>
    </ligandPart>
</feature>
<feature type="site" description="Transition state stabilizer" evidence="1">
    <location>
        <position position="104"/>
    </location>
</feature>
<feature type="cross-link" description="Tryptophyl-tyrosyl-methioninium (Trp-Tyr) (with M-255); alternate" evidence="1 6">
    <location>
        <begin position="107"/>
        <end position="229"/>
    </location>
</feature>
<feature type="cross-link" description="Tryptophyl-tyrosyl-methioninium (Tyr-Met) (with W-107); alternate" evidence="1 6">
    <location>
        <begin position="229"/>
        <end position="255"/>
    </location>
</feature>
<feature type="sequence variant" description="In strain: H0892/92; INH-resistant.">
    <original>W</original>
    <variation>G</variation>
    <location>
        <position position="300"/>
    </location>
</feature>
<feature type="sequence variant" description="In strain: H0181/94, H0452/92, H0948/92 and H0169/93; INH-resistant.">
    <original>S</original>
    <variation>T</variation>
    <location>
        <position position="315"/>
    </location>
</feature>
<feature type="sequence variant" description="In strain: H0169/93; INH-resistant.">
    <original>R</original>
    <variation>L</variation>
    <location>
        <position position="463"/>
    </location>
</feature>
<feature type="sequence variant" description="In strain: H0948/92; INH-resistant.">
    <original>P</original>
    <variation>A</variation>
    <location>
        <position position="501"/>
    </location>
</feature>
<feature type="sequence variant" description="In strain: H0251/90; INH-resistant.">
    <original>Q</original>
    <variation>P</variation>
    <location>
        <position position="525"/>
    </location>
</feature>
<feature type="sequence variant" description="In strain: 15726/89; INH-resistant.">
    <original>L</original>
    <variation>P</variation>
    <location>
        <position position="587"/>
    </location>
</feature>
<feature type="sequence variant" description="In strain: H0004/93; INH-resistant.">
    <original>S</original>
    <variation>P</variation>
    <location>
        <position position="700"/>
    </location>
</feature>
<feature type="mutagenesis site" description="Exhibits 8-fold increased catalytic efficiency for the activation of INH (INH-NAD formation). Possesses an enlarged substrate access channel." evidence="11">
    <original>D</original>
    <variation>S</variation>
    <location>
        <position position="137"/>
    </location>
</feature>
<feature type="mutagenesis site" description="Exhibits 2-fold increased affinity for INH." evidence="11">
    <original>Y</original>
    <variation>F</variation>
    <location>
        <position position="229"/>
    </location>
</feature>
<feature type="mutagenesis site" description="20-fold decrease in the rate of INH-NAD adduct formation. Exhibits significantly reduced affinity for INH (KM is increased by 43-fold)." evidence="8 11">
    <original>S</original>
    <variation>T</variation>
    <location>
        <position position="315"/>
    </location>
</feature>
<feature type="mutagenesis site" description="Nearly no effect on the kinetic parameters for the activation of INH." evidence="11">
    <original>W</original>
    <variation>F</variation>
    <location>
        <position position="321"/>
    </location>
</feature>
<feature type="mutagenesis site" description="Exhibits 1.7-fold decreased catalytic efficiency for the activation of INH." evidence="11">
    <original>R</original>
    <variation>L</variation>
    <location>
        <position position="418"/>
    </location>
</feature>
<feature type="mutagenesis site" description="Nearly no effect on the kinetic parameters for the catalase and peroxidase activity. Activates INH and mediates InhA inactivation as efficiently as wild-type." evidence="13">
    <original>R</original>
    <variation>L</variation>
    <location>
        <position position="463"/>
    </location>
</feature>
<feature type="sequence conflict" description="In Ref. 1; CAA48213." evidence="18" ref="1">
    <original>G</original>
    <variation>A</variation>
    <location>
        <position position="234"/>
    </location>
</feature>
<feature type="sequence conflict" description="In Ref. 9; AAA72374." evidence="18" ref="9">
    <original>QPQVGWEVNDPDG</original>
    <variation>CSHKSGGRSTTRR</variation>
    <location>
        <begin position="500"/>
        <end position="512"/>
    </location>
</feature>
<feature type="helix" evidence="28">
    <location>
        <begin position="29"/>
        <end position="31"/>
    </location>
</feature>
<feature type="helix" evidence="28">
    <location>
        <begin position="35"/>
        <end position="37"/>
    </location>
</feature>
<feature type="helix" evidence="28">
    <location>
        <begin position="45"/>
        <end position="48"/>
    </location>
</feature>
<feature type="strand" evidence="30">
    <location>
        <begin position="49"/>
        <end position="51"/>
    </location>
</feature>
<feature type="helix" evidence="28">
    <location>
        <begin position="53"/>
        <end position="55"/>
    </location>
</feature>
<feature type="helix" evidence="28">
    <location>
        <begin position="64"/>
        <end position="68"/>
    </location>
</feature>
<feature type="helix" evidence="28">
    <location>
        <begin position="73"/>
        <end position="84"/>
    </location>
</feature>
<feature type="strand" evidence="33">
    <location>
        <begin position="89"/>
        <end position="91"/>
    </location>
</feature>
<feature type="helix" evidence="28">
    <location>
        <begin position="94"/>
        <end position="96"/>
    </location>
</feature>
<feature type="helix" evidence="28">
    <location>
        <begin position="99"/>
        <end position="110"/>
    </location>
</feature>
<feature type="turn" evidence="28">
    <location>
        <begin position="115"/>
        <end position="117"/>
    </location>
</feature>
<feature type="helix" evidence="29">
    <location>
        <begin position="122"/>
        <end position="124"/>
    </location>
</feature>
<feature type="helix" evidence="28">
    <location>
        <begin position="126"/>
        <end position="128"/>
    </location>
</feature>
<feature type="helix" evidence="28">
    <location>
        <begin position="132"/>
        <end position="134"/>
    </location>
</feature>
<feature type="helix" evidence="28">
    <location>
        <begin position="136"/>
        <end position="138"/>
    </location>
</feature>
<feature type="helix" evidence="28">
    <location>
        <begin position="141"/>
        <end position="146"/>
    </location>
</feature>
<feature type="helix" evidence="28">
    <location>
        <begin position="149"/>
        <end position="155"/>
    </location>
</feature>
<feature type="helix" evidence="28">
    <location>
        <begin position="156"/>
        <end position="158"/>
    </location>
</feature>
<feature type="helix" evidence="28">
    <location>
        <begin position="161"/>
        <end position="175"/>
    </location>
</feature>
<feature type="turn" evidence="28">
    <location>
        <begin position="212"/>
        <end position="214"/>
    </location>
</feature>
<feature type="strand" evidence="28">
    <location>
        <begin position="222"/>
        <end position="224"/>
    </location>
</feature>
<feature type="strand" evidence="28">
    <location>
        <begin position="228"/>
        <end position="230"/>
    </location>
</feature>
<feature type="helix" evidence="28">
    <location>
        <begin position="235"/>
        <end position="237"/>
    </location>
</feature>
<feature type="helix" evidence="28">
    <location>
        <begin position="241"/>
        <end position="253"/>
    </location>
</feature>
<feature type="turn" evidence="28">
    <location>
        <begin position="254"/>
        <end position="256"/>
    </location>
</feature>
<feature type="helix" evidence="28">
    <location>
        <begin position="259"/>
        <end position="270"/>
    </location>
</feature>
<feature type="strand" evidence="28">
    <location>
        <begin position="277"/>
        <end position="279"/>
    </location>
</feature>
<feature type="helix" evidence="28">
    <location>
        <begin position="281"/>
        <end position="283"/>
    </location>
</feature>
<feature type="helix" evidence="28">
    <location>
        <begin position="288"/>
        <end position="290"/>
    </location>
</feature>
<feature type="helix" evidence="28">
    <location>
        <begin position="293"/>
        <end position="295"/>
    </location>
</feature>
<feature type="strand" evidence="31">
    <location>
        <begin position="300"/>
        <end position="302"/>
    </location>
</feature>
<feature type="helix" evidence="28">
    <location>
        <begin position="309"/>
        <end position="311"/>
    </location>
</feature>
<feature type="strand" evidence="28">
    <location>
        <begin position="313"/>
        <end position="316"/>
    </location>
</feature>
<feature type="strand" evidence="30">
    <location>
        <begin position="322"/>
        <end position="324"/>
    </location>
</feature>
<feature type="helix" evidence="28">
    <location>
        <begin position="331"/>
        <end position="338"/>
    </location>
</feature>
<feature type="strand" evidence="28">
    <location>
        <begin position="341"/>
        <end position="345"/>
    </location>
</feature>
<feature type="strand" evidence="32">
    <location>
        <begin position="347"/>
        <end position="349"/>
    </location>
</feature>
<feature type="strand" evidence="28">
    <location>
        <begin position="351"/>
        <end position="355"/>
    </location>
</feature>
<feature type="helix" evidence="28">
    <location>
        <begin position="356"/>
        <end position="358"/>
    </location>
</feature>
<feature type="turn" evidence="28">
    <location>
        <begin position="359"/>
        <end position="362"/>
    </location>
</feature>
<feature type="strand" evidence="36">
    <location>
        <begin position="367"/>
        <end position="369"/>
    </location>
</feature>
<feature type="helix" evidence="28">
    <location>
        <begin position="379"/>
        <end position="386"/>
    </location>
</feature>
<feature type="helix" evidence="28">
    <location>
        <begin position="388"/>
        <end position="399"/>
    </location>
</feature>
<feature type="helix" evidence="28">
    <location>
        <begin position="401"/>
        <end position="417"/>
    </location>
</feature>
<feature type="helix" evidence="34">
    <location>
        <begin position="418"/>
        <end position="420"/>
    </location>
</feature>
<feature type="helix" evidence="28">
    <location>
        <begin position="423"/>
        <end position="425"/>
    </location>
</feature>
<feature type="strand" evidence="31">
    <location>
        <begin position="427"/>
        <end position="429"/>
    </location>
</feature>
<feature type="helix" evidence="28">
    <location>
        <begin position="437"/>
        <end position="439"/>
    </location>
</feature>
<feature type="strand" evidence="37">
    <location>
        <begin position="447"/>
        <end position="449"/>
    </location>
</feature>
<feature type="helix" evidence="28">
    <location>
        <begin position="452"/>
        <end position="463"/>
    </location>
</feature>
<feature type="turn" evidence="28">
    <location>
        <begin position="464"/>
        <end position="466"/>
    </location>
</feature>
<feature type="helix" evidence="28">
    <location>
        <begin position="469"/>
        <end position="480"/>
    </location>
</feature>
<feature type="turn" evidence="28">
    <location>
        <begin position="485"/>
        <end position="488"/>
    </location>
</feature>
<feature type="helix" evidence="28">
    <location>
        <begin position="496"/>
        <end position="498"/>
    </location>
</feature>
<feature type="helix" evidence="28">
    <location>
        <begin position="502"/>
        <end position="504"/>
    </location>
</feature>
<feature type="turn" evidence="35">
    <location>
        <begin position="506"/>
        <end position="508"/>
    </location>
</feature>
<feature type="turn" evidence="28">
    <location>
        <begin position="510"/>
        <end position="513"/>
    </location>
</feature>
<feature type="helix" evidence="28">
    <location>
        <begin position="514"/>
        <end position="531"/>
    </location>
</feature>
<feature type="strand" evidence="34">
    <location>
        <begin position="534"/>
        <end position="536"/>
    </location>
</feature>
<feature type="helix" evidence="28">
    <location>
        <begin position="540"/>
        <end position="558"/>
    </location>
</feature>
<feature type="helix" evidence="28">
    <location>
        <begin position="576"/>
        <end position="578"/>
    </location>
</feature>
<feature type="helix" evidence="28">
    <location>
        <begin position="581"/>
        <end position="584"/>
    </location>
</feature>
<feature type="helix" evidence="28">
    <location>
        <begin position="585"/>
        <end position="587"/>
    </location>
</feature>
<feature type="strand" evidence="28">
    <location>
        <begin position="590"/>
        <end position="592"/>
    </location>
</feature>
<feature type="helix" evidence="28">
    <location>
        <begin position="593"/>
        <end position="595"/>
    </location>
</feature>
<feature type="helix" evidence="28">
    <location>
        <begin position="606"/>
        <end position="616"/>
    </location>
</feature>
<feature type="helix" evidence="28">
    <location>
        <begin position="621"/>
        <end position="633"/>
    </location>
</feature>
<feature type="helix" evidence="28">
    <location>
        <begin position="638"/>
        <end position="640"/>
    </location>
</feature>
<feature type="strand" evidence="30">
    <location>
        <begin position="642"/>
        <end position="644"/>
    </location>
</feature>
<feature type="strand" evidence="35">
    <location>
        <begin position="648"/>
        <end position="651"/>
    </location>
</feature>
<feature type="helix" evidence="28">
    <location>
        <begin position="656"/>
        <end position="661"/>
    </location>
</feature>
<feature type="strand" evidence="28">
    <location>
        <begin position="667"/>
        <end position="670"/>
    </location>
</feature>
<feature type="strand" evidence="28">
    <location>
        <begin position="675"/>
        <end position="681"/>
    </location>
</feature>
<feature type="strand" evidence="29">
    <location>
        <begin position="683"/>
        <end position="685"/>
    </location>
</feature>
<feature type="strand" evidence="28">
    <location>
        <begin position="687"/>
        <end position="692"/>
    </location>
</feature>
<feature type="helix" evidence="28">
    <location>
        <begin position="693"/>
        <end position="700"/>
    </location>
</feature>
<feature type="helix" evidence="28">
    <location>
        <begin position="702"/>
        <end position="711"/>
    </location>
</feature>
<feature type="helix" evidence="34">
    <location>
        <begin position="714"/>
        <end position="716"/>
    </location>
</feature>
<feature type="helix" evidence="28">
    <location>
        <begin position="717"/>
        <end position="732"/>
    </location>
</feature>
<feature type="turn" evidence="28">
    <location>
        <begin position="733"/>
        <end position="735"/>
    </location>
</feature>
<feature type="helix" evidence="28">
    <location>
        <begin position="737"/>
        <end position="739"/>
    </location>
</feature>
<dbReference type="EC" id="1.11.1.21" evidence="1 10 13"/>
<dbReference type="EMBL" id="X68081">
    <property type="protein sequence ID" value="CAA48213.1"/>
    <property type="molecule type" value="Genomic_DNA"/>
</dbReference>
<dbReference type="EMBL" id="U06258">
    <property type="protein sequence ID" value="AAB04159.1"/>
    <property type="molecule type" value="Unassigned_DNA"/>
</dbReference>
<dbReference type="EMBL" id="U40593">
    <property type="protein sequence ID" value="AAA85167.1"/>
    <property type="molecule type" value="Genomic_DNA"/>
</dbReference>
<dbReference type="EMBL" id="U40595">
    <property type="protein sequence ID" value="AAA85169.1"/>
    <property type="molecule type" value="Genomic_DNA"/>
</dbReference>
<dbReference type="EMBL" id="U41305">
    <property type="protein sequence ID" value="AAA85171.1"/>
    <property type="molecule type" value="Genomic_DNA"/>
</dbReference>
<dbReference type="EMBL" id="U41306">
    <property type="protein sequence ID" value="AAA85172.1"/>
    <property type="molecule type" value="Genomic_DNA"/>
</dbReference>
<dbReference type="EMBL" id="U41307">
    <property type="protein sequence ID" value="AAA85173.1"/>
    <property type="molecule type" value="Genomic_DNA"/>
</dbReference>
<dbReference type="EMBL" id="U41308">
    <property type="protein sequence ID" value="AAA85174.1"/>
    <property type="molecule type" value="Genomic_DNA"/>
</dbReference>
<dbReference type="EMBL" id="U41309">
    <property type="protein sequence ID" value="AAA85175.1"/>
    <property type="molecule type" value="Genomic_DNA"/>
</dbReference>
<dbReference type="EMBL" id="U41310">
    <property type="protein sequence ID" value="AAA85176.1"/>
    <property type="molecule type" value="Genomic_DNA"/>
</dbReference>
<dbReference type="EMBL" id="U41311">
    <property type="protein sequence ID" value="AAA85177.1"/>
    <property type="molecule type" value="Genomic_DNA"/>
</dbReference>
<dbReference type="EMBL" id="U41312">
    <property type="protein sequence ID" value="AAA85178.1"/>
    <property type="molecule type" value="Genomic_DNA"/>
</dbReference>
<dbReference type="EMBL" id="U41313">
    <property type="protein sequence ID" value="AAA85179.1"/>
    <property type="molecule type" value="Genomic_DNA"/>
</dbReference>
<dbReference type="EMBL" id="U41314">
    <property type="protein sequence ID" value="AAA85180.1"/>
    <property type="molecule type" value="Genomic_DNA"/>
</dbReference>
<dbReference type="EMBL" id="JX303265">
    <property type="protein sequence ID" value="AFR90354.1"/>
    <property type="molecule type" value="Genomic_DNA"/>
</dbReference>
<dbReference type="EMBL" id="JX303270">
    <property type="protein sequence ID" value="AFR90359.1"/>
    <property type="molecule type" value="Genomic_DNA"/>
</dbReference>
<dbReference type="EMBL" id="JX303273">
    <property type="protein sequence ID" value="AFR90362.1"/>
    <property type="molecule type" value="Genomic_DNA"/>
</dbReference>
<dbReference type="EMBL" id="JX303276">
    <property type="protein sequence ID" value="AFR90365.1"/>
    <property type="molecule type" value="Genomic_DNA"/>
</dbReference>
<dbReference type="EMBL" id="JX303277">
    <property type="protein sequence ID" value="AFR90366.1"/>
    <property type="molecule type" value="Genomic_DNA"/>
</dbReference>
<dbReference type="EMBL" id="JX303278">
    <property type="protein sequence ID" value="AFR90367.1"/>
    <property type="molecule type" value="Genomic_DNA"/>
</dbReference>
<dbReference type="EMBL" id="JX303280">
    <property type="protein sequence ID" value="AFR90369.1"/>
    <property type="molecule type" value="Genomic_DNA"/>
</dbReference>
<dbReference type="EMBL" id="AL123456">
    <property type="protein sequence ID" value="CCP44675.1"/>
    <property type="molecule type" value="Genomic_DNA"/>
</dbReference>
<dbReference type="EMBL" id="AF002194">
    <property type="protein sequence ID" value="AAB63371.1"/>
    <property type="molecule type" value="Genomic_DNA"/>
</dbReference>
<dbReference type="EMBL" id="L14268">
    <property type="protein sequence ID" value="AAA72374.1"/>
    <property type="molecule type" value="Genomic_DNA"/>
</dbReference>
<dbReference type="PIR" id="A70519">
    <property type="entry name" value="A40662"/>
</dbReference>
<dbReference type="RefSeq" id="NP_216424.1">
    <property type="nucleotide sequence ID" value="NC_000962.3"/>
</dbReference>
<dbReference type="RefSeq" id="WP_003899075.1">
    <property type="nucleotide sequence ID" value="NZ_NVQJ01000034.1"/>
</dbReference>
<dbReference type="PDB" id="1SJ2">
    <property type="method" value="X-ray"/>
    <property type="resolution" value="2.41 A"/>
    <property type="chains" value="A/B=2-740"/>
</dbReference>
<dbReference type="PDB" id="2CCA">
    <property type="method" value="X-ray"/>
    <property type="resolution" value="2.00 A"/>
    <property type="chains" value="A/B=1-740"/>
</dbReference>
<dbReference type="PDB" id="2CCD">
    <property type="method" value="X-ray"/>
    <property type="resolution" value="2.10 A"/>
    <property type="chains" value="A/B=1-740"/>
</dbReference>
<dbReference type="PDB" id="4C50">
    <property type="method" value="X-ray"/>
    <property type="resolution" value="2.50 A"/>
    <property type="chains" value="A/B=1-740"/>
</dbReference>
<dbReference type="PDB" id="4C51">
    <property type="method" value="X-ray"/>
    <property type="resolution" value="3.10 A"/>
    <property type="chains" value="A/B=1-740"/>
</dbReference>
<dbReference type="PDB" id="6ZJI">
    <property type="method" value="EM"/>
    <property type="resolution" value="3.70 A"/>
    <property type="chains" value="AP1/BP1=1-740"/>
</dbReference>
<dbReference type="PDB" id="7A2I">
    <property type="method" value="EM"/>
    <property type="resolution" value="3.30 A"/>
    <property type="chains" value="A/B=1-740"/>
</dbReference>
<dbReference type="PDB" id="7A7A">
    <property type="method" value="EM"/>
    <property type="resolution" value="3.08 A"/>
    <property type="chains" value="A/B=1-740"/>
</dbReference>
<dbReference type="PDB" id="7A7C">
    <property type="method" value="EM"/>
    <property type="resolution" value="3.16 A"/>
    <property type="chains" value="A/B=1-740"/>
</dbReference>
<dbReference type="PDB" id="7A8Z">
    <property type="method" value="EM"/>
    <property type="resolution" value="3.35 A"/>
    <property type="chains" value="A/B=1-740"/>
</dbReference>
<dbReference type="PDB" id="7AA3">
    <property type="method" value="EM"/>
    <property type="resolution" value="3.56 A"/>
    <property type="chains" value="A/B=1-740"/>
</dbReference>
<dbReference type="PDB" id="7AG8">
    <property type="method" value="EM"/>
    <property type="resolution" value="2.68 A"/>
    <property type="chains" value="A/B=1-740"/>
</dbReference>
<dbReference type="PDB" id="8CZP">
    <property type="method" value="X-ray"/>
    <property type="resolution" value="2.25 A"/>
    <property type="chains" value="A/B=2-740"/>
</dbReference>
<dbReference type="PDB" id="8DWR">
    <property type="method" value="X-ray"/>
    <property type="resolution" value="2.10 A"/>
    <property type="chains" value="A/B/C/D=2-740"/>
</dbReference>
<dbReference type="PDB" id="8U3P">
    <property type="method" value="X-ray"/>
    <property type="resolution" value="1.79 A"/>
    <property type="chains" value="A/B/C/D=2-740"/>
</dbReference>
<dbReference type="PDB" id="8W1W">
    <property type="method" value="X-ray"/>
    <property type="resolution" value="2.03 A"/>
    <property type="chains" value="A/B/C/D=2-740"/>
</dbReference>
<dbReference type="PDB" id="8W1X">
    <property type="method" value="X-ray"/>
    <property type="resolution" value="2.35 A"/>
    <property type="chains" value="A/B=2-740"/>
</dbReference>
<dbReference type="PDB" id="8W1Y">
    <property type="method" value="X-ray"/>
    <property type="resolution" value="2.30 A"/>
    <property type="chains" value="A/B/C/D=2-740"/>
</dbReference>
<dbReference type="PDBsum" id="1SJ2"/>
<dbReference type="PDBsum" id="2CCA"/>
<dbReference type="PDBsum" id="2CCD"/>
<dbReference type="PDBsum" id="4C50"/>
<dbReference type="PDBsum" id="4C51"/>
<dbReference type="PDBsum" id="6ZJI"/>
<dbReference type="PDBsum" id="7A2I"/>
<dbReference type="PDBsum" id="7A7A"/>
<dbReference type="PDBsum" id="7A7C"/>
<dbReference type="PDBsum" id="7A8Z"/>
<dbReference type="PDBsum" id="7AA3"/>
<dbReference type="PDBsum" id="7AG8"/>
<dbReference type="PDBsum" id="8CZP"/>
<dbReference type="PDBsum" id="8DWR"/>
<dbReference type="PDBsum" id="8U3P"/>
<dbReference type="PDBsum" id="8W1W"/>
<dbReference type="PDBsum" id="8W1X"/>
<dbReference type="PDBsum" id="8W1Y"/>
<dbReference type="SMR" id="P9WIE5"/>
<dbReference type="FunCoup" id="P9WIE5">
    <property type="interactions" value="10"/>
</dbReference>
<dbReference type="STRING" id="83332.Rv1908c"/>
<dbReference type="DrugBank" id="DB00609">
    <property type="generic name" value="Ethionamide"/>
</dbReference>
<dbReference type="DrugBank" id="DB00951">
    <property type="generic name" value="Isoniazid"/>
</dbReference>
<dbReference type="PaxDb" id="83332-Rv1908c"/>
<dbReference type="ABCD" id="P9WIE5">
    <property type="antibodies" value="1 sequenced antibody"/>
</dbReference>
<dbReference type="DNASU" id="885638"/>
<dbReference type="GeneID" id="885638"/>
<dbReference type="KEGG" id="mtu:Rv1908c"/>
<dbReference type="TubercuList" id="Rv1908c"/>
<dbReference type="eggNOG" id="COG0376">
    <property type="taxonomic scope" value="Bacteria"/>
</dbReference>
<dbReference type="InParanoid" id="P9WIE5"/>
<dbReference type="OrthoDB" id="9759743at2"/>
<dbReference type="PhylomeDB" id="P9WIE5"/>
<dbReference type="BioCyc" id="MetaCyc:G185E-6105-MONOMER"/>
<dbReference type="BRENDA" id="1.11.1.21">
    <property type="organism ID" value="3445"/>
</dbReference>
<dbReference type="Reactome" id="R-HSA-1222387">
    <property type="pathway name" value="Tolerance of reactive oxygen produced by macrophages"/>
</dbReference>
<dbReference type="EvolutionaryTrace" id="P9WIE5"/>
<dbReference type="Proteomes" id="UP000001584">
    <property type="component" value="Chromosome"/>
</dbReference>
<dbReference type="GO" id="GO:0005829">
    <property type="term" value="C:cytosol"/>
    <property type="evidence" value="ECO:0000314"/>
    <property type="project" value="MTBBASE"/>
</dbReference>
<dbReference type="GO" id="GO:0005576">
    <property type="term" value="C:extracellular region"/>
    <property type="evidence" value="ECO:0007005"/>
    <property type="project" value="MTBBASE"/>
</dbReference>
<dbReference type="GO" id="GO:0009274">
    <property type="term" value="C:peptidoglycan-based cell wall"/>
    <property type="evidence" value="ECO:0007005"/>
    <property type="project" value="MTBBASE"/>
</dbReference>
<dbReference type="GO" id="GO:0005886">
    <property type="term" value="C:plasma membrane"/>
    <property type="evidence" value="ECO:0007005"/>
    <property type="project" value="MTBBASE"/>
</dbReference>
<dbReference type="GO" id="GO:0004096">
    <property type="term" value="F:catalase activity"/>
    <property type="evidence" value="ECO:0000314"/>
    <property type="project" value="MTBBASE"/>
</dbReference>
<dbReference type="GO" id="GO:0020037">
    <property type="term" value="F:heme binding"/>
    <property type="evidence" value="ECO:0000314"/>
    <property type="project" value="MTBBASE"/>
</dbReference>
<dbReference type="GO" id="GO:0046872">
    <property type="term" value="F:metal ion binding"/>
    <property type="evidence" value="ECO:0007669"/>
    <property type="project" value="UniProtKB-KW"/>
</dbReference>
<dbReference type="GO" id="GO:0070404">
    <property type="term" value="F:NADH binding"/>
    <property type="evidence" value="ECO:0000314"/>
    <property type="project" value="MTBBASE"/>
</dbReference>
<dbReference type="GO" id="GO:0070402">
    <property type="term" value="F:NADPH binding"/>
    <property type="evidence" value="ECO:0000314"/>
    <property type="project" value="MTBBASE"/>
</dbReference>
<dbReference type="GO" id="GO:0016677">
    <property type="term" value="F:oxidoreductase activity, acting on a heme group of donors, nitrogenous group as acceptor"/>
    <property type="evidence" value="ECO:0000314"/>
    <property type="project" value="MTBBASE"/>
</dbReference>
<dbReference type="GO" id="GO:0004601">
    <property type="term" value="F:peroxidase activity"/>
    <property type="evidence" value="ECO:0000314"/>
    <property type="project" value="MTBBASE"/>
</dbReference>
<dbReference type="GO" id="GO:0070301">
    <property type="term" value="P:cellular response to hydrogen peroxide"/>
    <property type="evidence" value="ECO:0000318"/>
    <property type="project" value="GO_Central"/>
</dbReference>
<dbReference type="GO" id="GO:0042744">
    <property type="term" value="P:hydrogen peroxide catabolic process"/>
    <property type="evidence" value="ECO:0000314"/>
    <property type="project" value="MTBBASE"/>
</dbReference>
<dbReference type="GO" id="GO:0045739">
    <property type="term" value="P:positive regulation of DNA repair"/>
    <property type="evidence" value="ECO:0000316"/>
    <property type="project" value="UniProtKB"/>
</dbReference>
<dbReference type="GO" id="GO:0046677">
    <property type="term" value="P:response to antibiotic"/>
    <property type="evidence" value="ECO:0007669"/>
    <property type="project" value="UniProtKB-KW"/>
</dbReference>
<dbReference type="GO" id="GO:0006979">
    <property type="term" value="P:response to oxidative stress"/>
    <property type="evidence" value="ECO:0000315"/>
    <property type="project" value="MTBBASE"/>
</dbReference>
<dbReference type="CDD" id="cd00649">
    <property type="entry name" value="catalase_peroxidase_1"/>
    <property type="match status" value="1"/>
</dbReference>
<dbReference type="CDD" id="cd08200">
    <property type="entry name" value="catalase_peroxidase_2"/>
    <property type="match status" value="1"/>
</dbReference>
<dbReference type="FunFam" id="1.10.420.10:FF:000002">
    <property type="entry name" value="Catalase-peroxidase"/>
    <property type="match status" value="1"/>
</dbReference>
<dbReference type="FunFam" id="1.10.420.10:FF:000004">
    <property type="entry name" value="Catalase-peroxidase"/>
    <property type="match status" value="1"/>
</dbReference>
<dbReference type="FunFam" id="1.10.520.10:FF:000002">
    <property type="entry name" value="Catalase-peroxidase"/>
    <property type="match status" value="1"/>
</dbReference>
<dbReference type="Gene3D" id="1.10.520.10">
    <property type="match status" value="2"/>
</dbReference>
<dbReference type="Gene3D" id="1.10.420.10">
    <property type="entry name" value="Peroxidase, domain 2"/>
    <property type="match status" value="2"/>
</dbReference>
<dbReference type="HAMAP" id="MF_01961">
    <property type="entry name" value="Catal_peroxid"/>
    <property type="match status" value="1"/>
</dbReference>
<dbReference type="InterPro" id="IPR000763">
    <property type="entry name" value="Catalase_peroxidase"/>
</dbReference>
<dbReference type="InterPro" id="IPR002016">
    <property type="entry name" value="Haem_peroxidase"/>
</dbReference>
<dbReference type="InterPro" id="IPR010255">
    <property type="entry name" value="Haem_peroxidase_sf"/>
</dbReference>
<dbReference type="InterPro" id="IPR019794">
    <property type="entry name" value="Peroxidases_AS"/>
</dbReference>
<dbReference type="InterPro" id="IPR019793">
    <property type="entry name" value="Peroxidases_heam-ligand_BS"/>
</dbReference>
<dbReference type="NCBIfam" id="TIGR00198">
    <property type="entry name" value="cat_per_HPI"/>
    <property type="match status" value="1"/>
</dbReference>
<dbReference type="NCBIfam" id="NF011635">
    <property type="entry name" value="PRK15061.1"/>
    <property type="match status" value="1"/>
</dbReference>
<dbReference type="PANTHER" id="PTHR30555:SF0">
    <property type="entry name" value="CATALASE-PEROXIDASE"/>
    <property type="match status" value="1"/>
</dbReference>
<dbReference type="PANTHER" id="PTHR30555">
    <property type="entry name" value="HYDROPEROXIDASE I, BIFUNCTIONAL CATALASE-PEROXIDASE"/>
    <property type="match status" value="1"/>
</dbReference>
<dbReference type="Pfam" id="PF00141">
    <property type="entry name" value="peroxidase"/>
    <property type="match status" value="2"/>
</dbReference>
<dbReference type="PRINTS" id="PR00460">
    <property type="entry name" value="BPEROXIDASE"/>
</dbReference>
<dbReference type="PRINTS" id="PR00458">
    <property type="entry name" value="PEROXIDASE"/>
</dbReference>
<dbReference type="SUPFAM" id="SSF48113">
    <property type="entry name" value="Heme-dependent peroxidases"/>
    <property type="match status" value="2"/>
</dbReference>
<dbReference type="PROSITE" id="PS00435">
    <property type="entry name" value="PEROXIDASE_1"/>
    <property type="match status" value="1"/>
</dbReference>
<dbReference type="PROSITE" id="PS00436">
    <property type="entry name" value="PEROXIDASE_2"/>
    <property type="match status" value="1"/>
</dbReference>
<dbReference type="PROSITE" id="PS50873">
    <property type="entry name" value="PEROXIDASE_4"/>
    <property type="match status" value="1"/>
</dbReference>
<gene>
    <name evidence="16" type="primary">katG</name>
    <name type="ordered locus">Rv1908c</name>
    <name type="ORF">MTCY180.10</name>
</gene>